<dbReference type="EC" id="3.1.26.4" evidence="1"/>
<dbReference type="EMBL" id="BX572596">
    <property type="protein sequence ID" value="CAE26477.1"/>
    <property type="molecule type" value="Genomic_DNA"/>
</dbReference>
<dbReference type="RefSeq" id="WP_011156567.1">
    <property type="nucleotide sequence ID" value="NZ_CP116810.1"/>
</dbReference>
<dbReference type="SMR" id="Q6NAZ6"/>
<dbReference type="STRING" id="258594.RPA1034"/>
<dbReference type="GeneID" id="66892053"/>
<dbReference type="eggNOG" id="COG0164">
    <property type="taxonomic scope" value="Bacteria"/>
</dbReference>
<dbReference type="HOGENOM" id="CLU_036532_2_2_5"/>
<dbReference type="PhylomeDB" id="Q6NAZ6"/>
<dbReference type="GO" id="GO:0005737">
    <property type="term" value="C:cytoplasm"/>
    <property type="evidence" value="ECO:0007669"/>
    <property type="project" value="UniProtKB-SubCell"/>
</dbReference>
<dbReference type="GO" id="GO:0032299">
    <property type="term" value="C:ribonuclease H2 complex"/>
    <property type="evidence" value="ECO:0007669"/>
    <property type="project" value="TreeGrafter"/>
</dbReference>
<dbReference type="GO" id="GO:0030145">
    <property type="term" value="F:manganese ion binding"/>
    <property type="evidence" value="ECO:0007669"/>
    <property type="project" value="UniProtKB-UniRule"/>
</dbReference>
<dbReference type="GO" id="GO:0003723">
    <property type="term" value="F:RNA binding"/>
    <property type="evidence" value="ECO:0007669"/>
    <property type="project" value="InterPro"/>
</dbReference>
<dbReference type="GO" id="GO:0004523">
    <property type="term" value="F:RNA-DNA hybrid ribonuclease activity"/>
    <property type="evidence" value="ECO:0007669"/>
    <property type="project" value="UniProtKB-UniRule"/>
</dbReference>
<dbReference type="GO" id="GO:0043137">
    <property type="term" value="P:DNA replication, removal of RNA primer"/>
    <property type="evidence" value="ECO:0007669"/>
    <property type="project" value="TreeGrafter"/>
</dbReference>
<dbReference type="GO" id="GO:0006298">
    <property type="term" value="P:mismatch repair"/>
    <property type="evidence" value="ECO:0007669"/>
    <property type="project" value="TreeGrafter"/>
</dbReference>
<dbReference type="CDD" id="cd07182">
    <property type="entry name" value="RNase_HII_bacteria_HII_like"/>
    <property type="match status" value="1"/>
</dbReference>
<dbReference type="FunFam" id="3.30.420.10:FF:000078">
    <property type="entry name" value="Ribonuclease HII"/>
    <property type="match status" value="1"/>
</dbReference>
<dbReference type="Gene3D" id="3.30.420.10">
    <property type="entry name" value="Ribonuclease H-like superfamily/Ribonuclease H"/>
    <property type="match status" value="1"/>
</dbReference>
<dbReference type="HAMAP" id="MF_00052_B">
    <property type="entry name" value="RNase_HII_B"/>
    <property type="match status" value="1"/>
</dbReference>
<dbReference type="InterPro" id="IPR022898">
    <property type="entry name" value="RNase_HII"/>
</dbReference>
<dbReference type="InterPro" id="IPR001352">
    <property type="entry name" value="RNase_HII/HIII"/>
</dbReference>
<dbReference type="InterPro" id="IPR024567">
    <property type="entry name" value="RNase_HII/HIII_dom"/>
</dbReference>
<dbReference type="InterPro" id="IPR012337">
    <property type="entry name" value="RNaseH-like_sf"/>
</dbReference>
<dbReference type="InterPro" id="IPR036397">
    <property type="entry name" value="RNaseH_sf"/>
</dbReference>
<dbReference type="NCBIfam" id="NF000595">
    <property type="entry name" value="PRK00015.1-3"/>
    <property type="match status" value="1"/>
</dbReference>
<dbReference type="PANTHER" id="PTHR10954">
    <property type="entry name" value="RIBONUCLEASE H2 SUBUNIT A"/>
    <property type="match status" value="1"/>
</dbReference>
<dbReference type="PANTHER" id="PTHR10954:SF18">
    <property type="entry name" value="RIBONUCLEASE HII"/>
    <property type="match status" value="1"/>
</dbReference>
<dbReference type="Pfam" id="PF01351">
    <property type="entry name" value="RNase_HII"/>
    <property type="match status" value="1"/>
</dbReference>
<dbReference type="SUPFAM" id="SSF53098">
    <property type="entry name" value="Ribonuclease H-like"/>
    <property type="match status" value="1"/>
</dbReference>
<dbReference type="PROSITE" id="PS51975">
    <property type="entry name" value="RNASE_H_2"/>
    <property type="match status" value="1"/>
</dbReference>
<feature type="chain" id="PRO_0000235760" description="Ribonuclease HII">
    <location>
        <begin position="1"/>
        <end position="304"/>
    </location>
</feature>
<feature type="domain" description="RNase H type-2" evidence="2">
    <location>
        <begin position="96"/>
        <end position="284"/>
    </location>
</feature>
<feature type="region of interest" description="Disordered" evidence="3">
    <location>
        <begin position="1"/>
        <end position="53"/>
    </location>
</feature>
<feature type="compositionally biased region" description="Basic residues" evidence="3">
    <location>
        <begin position="24"/>
        <end position="35"/>
    </location>
</feature>
<feature type="compositionally biased region" description="Low complexity" evidence="3">
    <location>
        <begin position="36"/>
        <end position="53"/>
    </location>
</feature>
<feature type="binding site" evidence="1">
    <location>
        <position position="102"/>
    </location>
    <ligand>
        <name>a divalent metal cation</name>
        <dbReference type="ChEBI" id="CHEBI:60240"/>
    </ligand>
</feature>
<feature type="binding site" evidence="1">
    <location>
        <position position="103"/>
    </location>
    <ligand>
        <name>a divalent metal cation</name>
        <dbReference type="ChEBI" id="CHEBI:60240"/>
    </ligand>
</feature>
<feature type="binding site" evidence="1">
    <location>
        <position position="193"/>
    </location>
    <ligand>
        <name>a divalent metal cation</name>
        <dbReference type="ChEBI" id="CHEBI:60240"/>
    </ligand>
</feature>
<proteinExistence type="inferred from homology"/>
<name>RNH2_RHOPA</name>
<sequence length="304" mass="32176">MIRDTKQPIKVPAKPASRSGGKAKTVKPKTVKPKAVKAADGKAASAKASTSKAAVSKTSAKAAAAKPASAKGLKGVIAMAPPSFRRERALIKRGIWPIAGCDEAGRGPLAGPVVAAAVVLDPKRVPKGLDDSKRLSAEKREALFEEICATAQVSVVYASPERINRDNILRASLWALTRAVHALPDLPRHVFVDGRDRLATQCDCEAVIGGDGLIASIAAASIIAKVSRDRLMCKLAEQCPGYGFEQHKGYGVPEHLDALARLGPTVHHRRFFAPVAAAWQKIEGAPQPQIRDLFEADVTVEATA</sequence>
<keyword id="KW-0963">Cytoplasm</keyword>
<keyword id="KW-0255">Endonuclease</keyword>
<keyword id="KW-0378">Hydrolase</keyword>
<keyword id="KW-0464">Manganese</keyword>
<keyword id="KW-0479">Metal-binding</keyword>
<keyword id="KW-0540">Nuclease</keyword>
<reference key="1">
    <citation type="journal article" date="2004" name="Nat. Biotechnol.">
        <title>Complete genome sequence of the metabolically versatile photosynthetic bacterium Rhodopseudomonas palustris.</title>
        <authorList>
            <person name="Larimer F.W."/>
            <person name="Chain P."/>
            <person name="Hauser L."/>
            <person name="Lamerdin J.E."/>
            <person name="Malfatti S."/>
            <person name="Do L."/>
            <person name="Land M.L."/>
            <person name="Pelletier D.A."/>
            <person name="Beatty J.T."/>
            <person name="Lang A.S."/>
            <person name="Tabita F.R."/>
            <person name="Gibson J.L."/>
            <person name="Hanson T.E."/>
            <person name="Bobst C."/>
            <person name="Torres y Torres J.L."/>
            <person name="Peres C."/>
            <person name="Harrison F.H."/>
            <person name="Gibson J."/>
            <person name="Harwood C.S."/>
        </authorList>
    </citation>
    <scope>NUCLEOTIDE SEQUENCE [LARGE SCALE GENOMIC DNA]</scope>
    <source>
        <strain>ATCC BAA-98 / CGA009</strain>
    </source>
</reference>
<gene>
    <name evidence="1" type="primary">rnhB</name>
    <name type="ordered locus">RPA1034</name>
</gene>
<accession>Q6NAZ6</accession>
<organism>
    <name type="scientific">Rhodopseudomonas palustris (strain ATCC BAA-98 / CGA009)</name>
    <dbReference type="NCBI Taxonomy" id="258594"/>
    <lineage>
        <taxon>Bacteria</taxon>
        <taxon>Pseudomonadati</taxon>
        <taxon>Pseudomonadota</taxon>
        <taxon>Alphaproteobacteria</taxon>
        <taxon>Hyphomicrobiales</taxon>
        <taxon>Nitrobacteraceae</taxon>
        <taxon>Rhodopseudomonas</taxon>
    </lineage>
</organism>
<protein>
    <recommendedName>
        <fullName evidence="1">Ribonuclease HII</fullName>
        <shortName evidence="1">RNase HII</shortName>
        <ecNumber evidence="1">3.1.26.4</ecNumber>
    </recommendedName>
</protein>
<comment type="function">
    <text evidence="1">Endonuclease that specifically degrades the RNA of RNA-DNA hybrids.</text>
</comment>
<comment type="catalytic activity">
    <reaction evidence="1">
        <text>Endonucleolytic cleavage to 5'-phosphomonoester.</text>
        <dbReference type="EC" id="3.1.26.4"/>
    </reaction>
</comment>
<comment type="cofactor">
    <cofactor evidence="1">
        <name>Mn(2+)</name>
        <dbReference type="ChEBI" id="CHEBI:29035"/>
    </cofactor>
    <cofactor evidence="1">
        <name>Mg(2+)</name>
        <dbReference type="ChEBI" id="CHEBI:18420"/>
    </cofactor>
    <text evidence="1">Manganese or magnesium. Binds 1 divalent metal ion per monomer in the absence of substrate. May bind a second metal ion after substrate binding.</text>
</comment>
<comment type="subcellular location">
    <subcellularLocation>
        <location evidence="1">Cytoplasm</location>
    </subcellularLocation>
</comment>
<comment type="similarity">
    <text evidence="1">Belongs to the RNase HII family.</text>
</comment>
<evidence type="ECO:0000255" key="1">
    <source>
        <dbReference type="HAMAP-Rule" id="MF_00052"/>
    </source>
</evidence>
<evidence type="ECO:0000255" key="2">
    <source>
        <dbReference type="PROSITE-ProRule" id="PRU01319"/>
    </source>
</evidence>
<evidence type="ECO:0000256" key="3">
    <source>
        <dbReference type="SAM" id="MobiDB-lite"/>
    </source>
</evidence>